<organism>
    <name type="scientific">Homo sapiens</name>
    <name type="common">Human</name>
    <dbReference type="NCBI Taxonomy" id="9606"/>
    <lineage>
        <taxon>Eukaryota</taxon>
        <taxon>Metazoa</taxon>
        <taxon>Chordata</taxon>
        <taxon>Craniata</taxon>
        <taxon>Vertebrata</taxon>
        <taxon>Euteleostomi</taxon>
        <taxon>Mammalia</taxon>
        <taxon>Eutheria</taxon>
        <taxon>Euarchontoglires</taxon>
        <taxon>Primates</taxon>
        <taxon>Haplorrhini</taxon>
        <taxon>Catarrhini</taxon>
        <taxon>Hominidae</taxon>
        <taxon>Homo</taxon>
    </lineage>
</organism>
<proteinExistence type="evidence at protein level"/>
<dbReference type="EMBL" id="BC034782">
    <property type="protein sequence ID" value="AAH34782.1"/>
    <property type="molecule type" value="mRNA"/>
</dbReference>
<dbReference type="CCDS" id="CCDS11082.1"/>
<dbReference type="RefSeq" id="NP_694962.1">
    <property type="nucleotide sequence ID" value="NM_153230.3"/>
</dbReference>
<dbReference type="RefSeq" id="XP_011521999.1">
    <property type="nucleotide sequence ID" value="XM_011523697.1"/>
</dbReference>
<dbReference type="SMR" id="Q8N4B4"/>
<dbReference type="BioGRID" id="127823">
    <property type="interactions" value="4"/>
</dbReference>
<dbReference type="ComplexPortal" id="CPX-7979">
    <property type="entry name" value="SCF E3 ubiquitin ligase complex, FBXO39 variant"/>
</dbReference>
<dbReference type="FunCoup" id="Q8N4B4">
    <property type="interactions" value="15"/>
</dbReference>
<dbReference type="IntAct" id="Q8N4B4">
    <property type="interactions" value="1"/>
</dbReference>
<dbReference type="STRING" id="9606.ENSP00000321386"/>
<dbReference type="iPTMnet" id="Q8N4B4"/>
<dbReference type="PhosphoSitePlus" id="Q8N4B4"/>
<dbReference type="BioMuta" id="FBXO39"/>
<dbReference type="DMDM" id="51701431"/>
<dbReference type="MassIVE" id="Q8N4B4"/>
<dbReference type="PaxDb" id="9606-ENSP00000321386"/>
<dbReference type="ProteomicsDB" id="71904"/>
<dbReference type="Antibodypedia" id="53192">
    <property type="antibodies" value="91 antibodies from 14 providers"/>
</dbReference>
<dbReference type="DNASU" id="162517"/>
<dbReference type="Ensembl" id="ENST00000321535.5">
    <property type="protein sequence ID" value="ENSP00000321386.4"/>
    <property type="gene ID" value="ENSG00000177294.7"/>
</dbReference>
<dbReference type="GeneID" id="162517"/>
<dbReference type="KEGG" id="hsa:162517"/>
<dbReference type="MANE-Select" id="ENST00000321535.5">
    <property type="protein sequence ID" value="ENSP00000321386.4"/>
    <property type="RefSeq nucleotide sequence ID" value="NM_153230.3"/>
    <property type="RefSeq protein sequence ID" value="NP_694962.1"/>
</dbReference>
<dbReference type="UCSC" id="uc010vtg.3">
    <property type="organism name" value="human"/>
</dbReference>
<dbReference type="AGR" id="HGNC:28565"/>
<dbReference type="CTD" id="162517"/>
<dbReference type="DisGeNET" id="162517"/>
<dbReference type="GeneCards" id="FBXO39"/>
<dbReference type="HGNC" id="HGNC:28565">
    <property type="gene designation" value="FBXO39"/>
</dbReference>
<dbReference type="HPA" id="ENSG00000177294">
    <property type="expression patterns" value="Tissue enriched (testis)"/>
</dbReference>
<dbReference type="MIM" id="609106">
    <property type="type" value="gene"/>
</dbReference>
<dbReference type="neXtProt" id="NX_Q8N4B4"/>
<dbReference type="OpenTargets" id="ENSG00000177294"/>
<dbReference type="PharmGKB" id="PA134889729"/>
<dbReference type="VEuPathDB" id="HostDB:ENSG00000177294"/>
<dbReference type="eggNOG" id="KOG1947">
    <property type="taxonomic scope" value="Eukaryota"/>
</dbReference>
<dbReference type="GeneTree" id="ENSGT00510000048837"/>
<dbReference type="HOGENOM" id="CLU_050223_0_0_1"/>
<dbReference type="InParanoid" id="Q8N4B4"/>
<dbReference type="OMA" id="MATFHNL"/>
<dbReference type="OrthoDB" id="61560at2759"/>
<dbReference type="PAN-GO" id="Q8N4B4">
    <property type="GO annotations" value="2 GO annotations based on evolutionary models"/>
</dbReference>
<dbReference type="PhylomeDB" id="Q8N4B4"/>
<dbReference type="TreeFam" id="TF321665"/>
<dbReference type="PathwayCommons" id="Q8N4B4"/>
<dbReference type="SignaLink" id="Q8N4B4"/>
<dbReference type="BioGRID-ORCS" id="162517">
    <property type="hits" value="8 hits in 1187 CRISPR screens"/>
</dbReference>
<dbReference type="GenomeRNAi" id="162517"/>
<dbReference type="Pharos" id="Q8N4B4">
    <property type="development level" value="Tbio"/>
</dbReference>
<dbReference type="PRO" id="PR:Q8N4B4"/>
<dbReference type="Proteomes" id="UP000005640">
    <property type="component" value="Chromosome 17"/>
</dbReference>
<dbReference type="RNAct" id="Q8N4B4">
    <property type="molecule type" value="protein"/>
</dbReference>
<dbReference type="Bgee" id="ENSG00000177294">
    <property type="expression patterns" value="Expressed in right testis and 96 other cell types or tissues"/>
</dbReference>
<dbReference type="ExpressionAtlas" id="Q8N4B4">
    <property type="expression patterns" value="baseline and differential"/>
</dbReference>
<dbReference type="GO" id="GO:0019005">
    <property type="term" value="C:SCF ubiquitin ligase complex"/>
    <property type="evidence" value="ECO:0000318"/>
    <property type="project" value="GO_Central"/>
</dbReference>
<dbReference type="GO" id="GO:0031146">
    <property type="term" value="P:SCF-dependent proteasomal ubiquitin-dependent protein catabolic process"/>
    <property type="evidence" value="ECO:0000318"/>
    <property type="project" value="GO_Central"/>
</dbReference>
<dbReference type="CDD" id="cd22108">
    <property type="entry name" value="F-box_FBXO39"/>
    <property type="match status" value="1"/>
</dbReference>
<dbReference type="FunFam" id="1.20.1280.50:FF:000027">
    <property type="entry name" value="F-box only protein 39"/>
    <property type="match status" value="1"/>
</dbReference>
<dbReference type="FunFam" id="3.80.10.10:FF:000237">
    <property type="entry name" value="F-box only protein 39"/>
    <property type="match status" value="1"/>
</dbReference>
<dbReference type="Gene3D" id="1.20.1280.50">
    <property type="match status" value="1"/>
</dbReference>
<dbReference type="Gene3D" id="3.80.10.10">
    <property type="entry name" value="Ribonuclease Inhibitor"/>
    <property type="match status" value="1"/>
</dbReference>
<dbReference type="InterPro" id="IPR036047">
    <property type="entry name" value="F-box-like_dom_sf"/>
</dbReference>
<dbReference type="InterPro" id="IPR001810">
    <property type="entry name" value="F-box_dom"/>
</dbReference>
<dbReference type="InterPro" id="IPR045048">
    <property type="entry name" value="FBXO31/39"/>
</dbReference>
<dbReference type="InterPro" id="IPR001611">
    <property type="entry name" value="Leu-rich_rpt"/>
</dbReference>
<dbReference type="InterPro" id="IPR032675">
    <property type="entry name" value="LRR_dom_sf"/>
</dbReference>
<dbReference type="PANTHER" id="PTHR10706">
    <property type="entry name" value="F-BOX FAMILY PROTEIN"/>
    <property type="match status" value="1"/>
</dbReference>
<dbReference type="PANTHER" id="PTHR10706:SF160">
    <property type="entry name" value="F-BOX ONLY PROTEIN 39"/>
    <property type="match status" value="1"/>
</dbReference>
<dbReference type="Pfam" id="PF12937">
    <property type="entry name" value="F-box-like"/>
    <property type="match status" value="1"/>
</dbReference>
<dbReference type="SUPFAM" id="SSF81383">
    <property type="entry name" value="F-box domain"/>
    <property type="match status" value="1"/>
</dbReference>
<dbReference type="SUPFAM" id="SSF52047">
    <property type="entry name" value="RNI-like"/>
    <property type="match status" value="1"/>
</dbReference>
<dbReference type="PROSITE" id="PS51450">
    <property type="entry name" value="LRR"/>
    <property type="match status" value="2"/>
</dbReference>
<keyword id="KW-1185">Reference proteome</keyword>
<keyword id="KW-0833">Ubl conjugation pathway</keyword>
<comment type="function">
    <text evidence="1">Substrate-recognition component of the SCF (SKP1-CUL1-F-box protein)-type E3 ubiquitin ligase complex.</text>
</comment>
<comment type="subunit">
    <text evidence="1">Directly interacts with SKP1 and CUL1.</text>
</comment>
<comment type="interaction">
    <interactant intactId="EBI-12383478">
        <id>Q8N4B4</id>
    </interactant>
    <interactant intactId="EBI-16439278">
        <id>Q6FHY5</id>
        <label>MEOX2</label>
    </interactant>
    <organismsDiffer>false</organismsDiffer>
    <experiments>3</experiments>
</comment>
<evidence type="ECO:0000250" key="1"/>
<protein>
    <recommendedName>
        <fullName>F-box only protein 39</fullName>
    </recommendedName>
</protein>
<feature type="chain" id="PRO_0000119935" description="F-box only protein 39">
    <location>
        <begin position="1"/>
        <end position="442"/>
    </location>
</feature>
<feature type="domain" description="F-box">
    <location>
        <begin position="16"/>
        <end position="61"/>
    </location>
</feature>
<feature type="sequence variant" id="VAR_024444" description="In dbSNP:rs4796555.">
    <original>P</original>
    <variation>S</variation>
    <location>
        <position position="10"/>
    </location>
</feature>
<feature type="sequence variant" id="VAR_049050" description="In dbSNP:rs16956264.">
    <original>Y</original>
    <variation>C</variation>
    <location>
        <position position="166"/>
    </location>
</feature>
<feature type="sequence variant" id="VAR_049051" description="In dbSNP:rs4143218.">
    <original>S</original>
    <variation>T</variation>
    <location>
        <position position="221"/>
    </location>
</feature>
<feature type="sequence variant" id="VAR_024445" description="In dbSNP:rs1509123.">
    <original>L</original>
    <variation>F</variation>
    <location>
        <position position="231"/>
    </location>
</feature>
<feature type="sequence variant" id="VAR_024446" description="In dbSNP:rs7213731.">
    <original>I</original>
    <variation>M</variation>
    <location>
        <position position="363"/>
    </location>
</feature>
<gene>
    <name type="primary">FBXO39</name>
    <name type="synonym">FBX39</name>
</gene>
<name>FBX39_HUMAN</name>
<reference key="1">
    <citation type="journal article" date="2004" name="Genome Res.">
        <title>The status, quality, and expansion of the NIH full-length cDNA project: the Mammalian Gene Collection (MGC).</title>
        <authorList>
            <consortium name="The MGC Project Team"/>
        </authorList>
    </citation>
    <scope>NUCLEOTIDE SEQUENCE [LARGE SCALE MRNA]</scope>
    <source>
        <tissue>Brain</tissue>
    </source>
</reference>
<accession>Q8N4B4</accession>
<sequence>MDEESELIQPQDQSCWAFLPDLCLCRVFWWLGDRDRSRAALVCRKWNQMMYSAELWRYRTITFSGRPSRVHASEVESAVWYVKKFGRYLEHLEVKFMNPYNAVLTKKFQVTMRGLLSCLSKSNNRLKSLSIQYLELDRLVWRNSIRSSFISSLSFFLKKMGKRLDYLNLKGARLTVEQGCQILDSLSYMRNENVISELNIEDYFSHHLAVYNSPQFKKTMSTFHNLVSLNLNYNCISDELLENLCENASTLRTINIKCHVHDPHGQVIWGMSWAKLARQATNLKVNFFFERIMKYERLARILLQEIPIRSISLRSCYFSDPDCSMRPTLIDLLPTFRHTLQKLTCEFNNNHESLDEELHLLIISCRKLFYFKIWAFLDVSFVERILKSQKERQCALRVFKARIYTNRYETNEEDKTLQEIYRKYRKLIESELSYFVIVYSVM</sequence>